<gene>
    <name type="primary">cxeA</name>
    <name type="synonym">cox5</name>
    <name type="ORF">DDB_G0269118</name>
</gene>
<dbReference type="EMBL" id="X55671">
    <property type="protein sequence ID" value="CAA39206.1"/>
    <property type="molecule type" value="mRNA"/>
</dbReference>
<dbReference type="EMBL" id="AAFI02000005">
    <property type="protein sequence ID" value="EAL71909.1"/>
    <property type="molecule type" value="Genomic_DNA"/>
</dbReference>
<dbReference type="EMBL" id="X64771">
    <property type="protein sequence ID" value="CAA46018.1"/>
    <property type="molecule type" value="Genomic_DNA"/>
</dbReference>
<dbReference type="PIR" id="S19718">
    <property type="entry name" value="S19718"/>
</dbReference>
<dbReference type="RefSeq" id="XP_646433.1">
    <property type="nucleotide sequence ID" value="XM_641341.1"/>
</dbReference>
<dbReference type="SMR" id="P29505"/>
<dbReference type="FunCoup" id="P29505">
    <property type="interactions" value="6"/>
</dbReference>
<dbReference type="STRING" id="44689.P29505"/>
<dbReference type="PaxDb" id="44689-DDB0191104"/>
<dbReference type="EnsemblProtists" id="EAL71909">
    <property type="protein sequence ID" value="EAL71909"/>
    <property type="gene ID" value="DDB_G0269118"/>
</dbReference>
<dbReference type="GeneID" id="8617392"/>
<dbReference type="KEGG" id="ddi:DDB_G0269118"/>
<dbReference type="dictyBase" id="DDB_G0269118">
    <property type="gene designation" value="cxeA"/>
</dbReference>
<dbReference type="VEuPathDB" id="AmoebaDB:DDB_G0269118"/>
<dbReference type="eggNOG" id="ENOG502RHQC">
    <property type="taxonomic scope" value="Eukaryota"/>
</dbReference>
<dbReference type="HOGENOM" id="CLU_2054088_0_0_1"/>
<dbReference type="InParanoid" id="P29505"/>
<dbReference type="OMA" id="PSHSMEF"/>
<dbReference type="Reactome" id="R-DDI-9837999">
    <property type="pathway name" value="Mitochondrial protein degradation"/>
</dbReference>
<dbReference type="UniPathway" id="UPA00705"/>
<dbReference type="PRO" id="PR:P29505"/>
<dbReference type="Proteomes" id="UP000002195">
    <property type="component" value="Chromosome 1"/>
</dbReference>
<dbReference type="GO" id="GO:0005743">
    <property type="term" value="C:mitochondrial inner membrane"/>
    <property type="evidence" value="ECO:0007669"/>
    <property type="project" value="UniProtKB-SubCell"/>
</dbReference>
<dbReference type="GO" id="GO:0045335">
    <property type="term" value="C:phagocytic vesicle"/>
    <property type="evidence" value="ECO:0007005"/>
    <property type="project" value="dictyBase"/>
</dbReference>
<dbReference type="GO" id="GO:0045277">
    <property type="term" value="C:respiratory chain complex IV"/>
    <property type="evidence" value="ECO:0007669"/>
    <property type="project" value="InterPro"/>
</dbReference>
<dbReference type="GO" id="GO:0046872">
    <property type="term" value="F:metal ion binding"/>
    <property type="evidence" value="ECO:0007669"/>
    <property type="project" value="UniProtKB-KW"/>
</dbReference>
<dbReference type="GO" id="GO:0006123">
    <property type="term" value="P:mitochondrial electron transport, cytochrome c to oxygen"/>
    <property type="evidence" value="ECO:0000318"/>
    <property type="project" value="GO_Central"/>
</dbReference>
<dbReference type="GO" id="GO:0009617">
    <property type="term" value="P:response to bacterium"/>
    <property type="evidence" value="ECO:0007007"/>
    <property type="project" value="dictyBase"/>
</dbReference>
<dbReference type="FunFam" id="2.60.11.10:FF:000009">
    <property type="entry name" value="Cytochrome c oxidase subunit 5"/>
    <property type="match status" value="1"/>
</dbReference>
<dbReference type="Gene3D" id="2.60.11.10">
    <property type="entry name" value="Cytochrome c oxidase, subunit Vb"/>
    <property type="match status" value="1"/>
</dbReference>
<dbReference type="InterPro" id="IPR002124">
    <property type="entry name" value="Cyt_c_oxidase_su5b"/>
</dbReference>
<dbReference type="InterPro" id="IPR036972">
    <property type="entry name" value="Cyt_c_oxidase_su5b_sf"/>
</dbReference>
<dbReference type="PANTHER" id="PTHR10122:SF0">
    <property type="entry name" value="CYTOCHROME C OXIDASE SUBUNIT 5B, ISOFORM A-RELATED"/>
    <property type="match status" value="1"/>
</dbReference>
<dbReference type="PANTHER" id="PTHR10122">
    <property type="entry name" value="CYTOCHROME C OXIDASE SUBUNIT 5B, MITOCHONDRIAL"/>
    <property type="match status" value="1"/>
</dbReference>
<dbReference type="Pfam" id="PF01215">
    <property type="entry name" value="COX5B"/>
    <property type="match status" value="1"/>
</dbReference>
<dbReference type="SUPFAM" id="SSF57802">
    <property type="entry name" value="Rubredoxin-like"/>
    <property type="match status" value="1"/>
</dbReference>
<dbReference type="PROSITE" id="PS00848">
    <property type="entry name" value="COX5B_1"/>
    <property type="match status" value="1"/>
</dbReference>
<dbReference type="PROSITE" id="PS51359">
    <property type="entry name" value="COX5B_2"/>
    <property type="match status" value="1"/>
</dbReference>
<accession>P29505</accession>
<accession>Q55CP8</accession>
<comment type="function">
    <text evidence="1">Component of the cytochrome c oxidase, the last enzyme in the mitochondrial electron transport chain which drives oxidative phosphorylation. The respiratory chain contains 3 multisubunit complexes succinate dehydrogenase (complex II, CII), ubiquinol-cytochrome c oxidoreductase (cytochrome b-c1 complex, complex III, CIII) and cytochrome c oxidase (complex IV, CIV), that cooperate to transfer electrons derived from NADH and succinate to molecular oxygen, creating an electrochemical gradient over the inner membrane that drives transmembrane transport and the ATP synthase. Cytochrome c oxidase is the component of the respiratory chain that catalyzes the reduction of oxygen to water. Electrons originating from reduced cytochrome c in the intermembrane space (IMS) are transferred via the dinuclear copper A center (CU(A)) of subunit 2 and heme A of subunit 1 to the active site in subunit 1, a binuclear center (BNC) formed by heme A3 and copper B (CU(B)). The BNC reduces molecular oxygen to 2 water molecules using 4 electrons from cytochrome c in the IMS and 4 protons from the mitochondrial matrix.</text>
</comment>
<comment type="pathway">
    <text evidence="1">Energy metabolism; oxidative phosphorylation.</text>
</comment>
<comment type="subunit">
    <text evidence="1 4">Component of the cytochrome c oxidase (complex IV, CIV), a multisubunit enzyme composed of a catalytic core of 3 subunits and several supernumerary subunits. The complex exists as a monomer or a dimer and forms supercomplexes (SCs) in the inner mitochondrial membrane with ubiquinol-cytochrome c oxidoreductase (cytochrome b-c1 complex, complex III, CIII) (By similarity). Slime mold cytochrome c oxidase consists of at least seven different polypeptides species, subunits I, II, III, IV, V, VI, and VIIe/s in order of MW (Probable).</text>
</comment>
<comment type="subcellular location">
    <subcellularLocation>
        <location evidence="1">Mitochondrion inner membrane</location>
        <topology evidence="1">Peripheral membrane protein</topology>
        <orientation evidence="1">Matrix side</orientation>
    </subcellularLocation>
</comment>
<comment type="similarity">
    <text evidence="3">Belongs to the cytochrome c oxidase subunit 5B family.</text>
</comment>
<reference key="1">
    <citation type="journal article" date="1991" name="Biochim. Biophys. Acta">
        <title>The most conserved nuclear-encoded polypeptide of cytochrome c oxidase is the putative zinc-binding subunit: primary structure of subunit V from the slime mold Dictyostelium discoideum.</title>
        <authorList>
            <person name="Rizzuto R."/>
            <person name="Sandona D."/>
            <person name="Brini M."/>
            <person name="Capaldi R.A."/>
            <person name="Bisson R."/>
        </authorList>
    </citation>
    <scope>NUCLEOTIDE SEQUENCE [MRNA]</scope>
    <scope>PROTEIN SEQUENCE OF 41-60</scope>
    <source>
        <strain>AX3</strain>
    </source>
</reference>
<reference key="2">
    <citation type="journal article" date="2005" name="Nature">
        <title>The genome of the social amoeba Dictyostelium discoideum.</title>
        <authorList>
            <person name="Eichinger L."/>
            <person name="Pachebat J.A."/>
            <person name="Gloeckner G."/>
            <person name="Rajandream M.A."/>
            <person name="Sucgang R."/>
            <person name="Berriman M."/>
            <person name="Song J."/>
            <person name="Olsen R."/>
            <person name="Szafranski K."/>
            <person name="Xu Q."/>
            <person name="Tunggal B."/>
            <person name="Kummerfeld S."/>
            <person name="Madera M."/>
            <person name="Konfortov B.A."/>
            <person name="Rivero F."/>
            <person name="Bankier A.T."/>
            <person name="Lehmann R."/>
            <person name="Hamlin N."/>
            <person name="Davies R."/>
            <person name="Gaudet P."/>
            <person name="Fey P."/>
            <person name="Pilcher K."/>
            <person name="Chen G."/>
            <person name="Saunders D."/>
            <person name="Sodergren E.J."/>
            <person name="Davis P."/>
            <person name="Kerhornou A."/>
            <person name="Nie X."/>
            <person name="Hall N."/>
            <person name="Anjard C."/>
            <person name="Hemphill L."/>
            <person name="Bason N."/>
            <person name="Farbrother P."/>
            <person name="Desany B."/>
            <person name="Just E."/>
            <person name="Morio T."/>
            <person name="Rost R."/>
            <person name="Churcher C.M."/>
            <person name="Cooper J."/>
            <person name="Haydock S."/>
            <person name="van Driessche N."/>
            <person name="Cronin A."/>
            <person name="Goodhead I."/>
            <person name="Muzny D.M."/>
            <person name="Mourier T."/>
            <person name="Pain A."/>
            <person name="Lu M."/>
            <person name="Harper D."/>
            <person name="Lindsay R."/>
            <person name="Hauser H."/>
            <person name="James K.D."/>
            <person name="Quiles M."/>
            <person name="Madan Babu M."/>
            <person name="Saito T."/>
            <person name="Buchrieser C."/>
            <person name="Wardroper A."/>
            <person name="Felder M."/>
            <person name="Thangavelu M."/>
            <person name="Johnson D."/>
            <person name="Knights A."/>
            <person name="Loulseged H."/>
            <person name="Mungall K.L."/>
            <person name="Oliver K."/>
            <person name="Price C."/>
            <person name="Quail M.A."/>
            <person name="Urushihara H."/>
            <person name="Hernandez J."/>
            <person name="Rabbinowitsch E."/>
            <person name="Steffen D."/>
            <person name="Sanders M."/>
            <person name="Ma J."/>
            <person name="Kohara Y."/>
            <person name="Sharp S."/>
            <person name="Simmonds M.N."/>
            <person name="Spiegler S."/>
            <person name="Tivey A."/>
            <person name="Sugano S."/>
            <person name="White B."/>
            <person name="Walker D."/>
            <person name="Woodward J.R."/>
            <person name="Winckler T."/>
            <person name="Tanaka Y."/>
            <person name="Shaulsky G."/>
            <person name="Schleicher M."/>
            <person name="Weinstock G.M."/>
            <person name="Rosenthal A."/>
            <person name="Cox E.C."/>
            <person name="Chisholm R.L."/>
            <person name="Gibbs R.A."/>
            <person name="Loomis W.F."/>
            <person name="Platzer M."/>
            <person name="Kay R.R."/>
            <person name="Williams J.G."/>
            <person name="Dear P.H."/>
            <person name="Noegel A.A."/>
            <person name="Barrell B.G."/>
            <person name="Kuspa A."/>
        </authorList>
    </citation>
    <scope>NUCLEOTIDE SEQUENCE [LARGE SCALE GENOMIC DNA]</scope>
    <source>
        <strain>AX4</strain>
    </source>
</reference>
<reference key="3">
    <citation type="journal article" date="1993" name="Eur. J. Biochem.">
        <title>Structure of the promoter region of the gene encoding cytochrome c oxidase subunit V in Dictyostelium.</title>
        <authorList>
            <person name="Rizzuto R."/>
            <person name="Sandona D."/>
            <person name="Brini M."/>
            <person name="Marschalek R."/>
            <person name="Dingermann T."/>
            <person name="Bisson R."/>
        </authorList>
    </citation>
    <scope>NUCLEOTIDE SEQUENCE [GENOMIC DNA] OF 1-32</scope>
</reference>
<organism>
    <name type="scientific">Dictyostelium discoideum</name>
    <name type="common">Social amoeba</name>
    <dbReference type="NCBI Taxonomy" id="44689"/>
    <lineage>
        <taxon>Eukaryota</taxon>
        <taxon>Amoebozoa</taxon>
        <taxon>Evosea</taxon>
        <taxon>Eumycetozoa</taxon>
        <taxon>Dictyostelia</taxon>
        <taxon>Dictyosteliales</taxon>
        <taxon>Dictyosteliaceae</taxon>
        <taxon>Dictyostelium</taxon>
    </lineage>
</organism>
<protein>
    <recommendedName>
        <fullName>Cytochrome c oxidase subunit 5</fullName>
    </recommendedName>
    <alternativeName>
        <fullName>Cytochrome c oxidase polypeptide V</fullName>
    </alternativeName>
</protein>
<feature type="initiator methionine" description="Removed">
    <location>
        <position position="1"/>
    </location>
</feature>
<feature type="chain" id="PRO_0000197033" description="Cytochrome c oxidase subunit 5">
    <location>
        <begin position="2"/>
        <end position="120"/>
    </location>
</feature>
<feature type="binding site" evidence="2">
    <location>
        <position position="76"/>
    </location>
    <ligand>
        <name>Zn(2+)</name>
        <dbReference type="ChEBI" id="CHEBI:29105"/>
    </ligand>
</feature>
<feature type="binding site" evidence="1">
    <location>
        <position position="84"/>
    </location>
    <ligand>
        <name>Zn(2+)</name>
        <dbReference type="ChEBI" id="CHEBI:29105"/>
    </ligand>
</feature>
<feature type="binding site" evidence="2">
    <location>
        <position position="99"/>
    </location>
    <ligand>
        <name>Zn(2+)</name>
        <dbReference type="ChEBI" id="CHEBI:29105"/>
    </ligand>
</feature>
<feature type="binding site" evidence="2">
    <location>
        <position position="102"/>
    </location>
    <ligand>
        <name>Zn(2+)</name>
        <dbReference type="ChEBI" id="CHEBI:29105"/>
    </ligand>
</feature>
<feature type="modified residue" description="Blocked amino end (Ser)">
    <location>
        <position position="2"/>
    </location>
</feature>
<proteinExistence type="evidence at protein level"/>
<sequence>MSKIVKFLKELATPSHSMEFFHKPASNSLLDASELNFVRRNIKREDFGHEVLTGAFGTLKSPVIVESIFHSRIVACEGGDGEEHDILFHTVAEKKPTICLDCGQVFKLKHISSEGEVMYY</sequence>
<name>COX5_DICDI</name>
<evidence type="ECO:0000250" key="1">
    <source>
        <dbReference type="UniProtKB" id="P04037"/>
    </source>
</evidence>
<evidence type="ECO:0000255" key="2">
    <source>
        <dbReference type="PROSITE-ProRule" id="PRU00692"/>
    </source>
</evidence>
<evidence type="ECO:0000305" key="3"/>
<evidence type="ECO:0000305" key="4">
    <source>
    </source>
</evidence>
<keyword id="KW-0903">Direct protein sequencing</keyword>
<keyword id="KW-0472">Membrane</keyword>
<keyword id="KW-0479">Metal-binding</keyword>
<keyword id="KW-0496">Mitochondrion</keyword>
<keyword id="KW-0999">Mitochondrion inner membrane</keyword>
<keyword id="KW-1185">Reference proteome</keyword>
<keyword id="KW-0862">Zinc</keyword>